<dbReference type="EC" id="3.4.21.-" evidence="1"/>
<dbReference type="EMBL" id="U79716">
    <property type="protein sequence ID" value="AAC51105.1"/>
    <property type="molecule type" value="mRNA"/>
</dbReference>
<dbReference type="EMBL" id="AC002067">
    <property type="protein sequence ID" value="AAM49151.1"/>
    <property type="molecule type" value="Genomic_DNA"/>
</dbReference>
<dbReference type="EMBL" id="AC006981">
    <property type="status" value="NOT_ANNOTATED_CDS"/>
    <property type="molecule type" value="Genomic_DNA"/>
</dbReference>
<dbReference type="EMBL" id="AC073208">
    <property type="protein sequence ID" value="AAP22355.1"/>
    <property type="molecule type" value="Genomic_DNA"/>
</dbReference>
<dbReference type="EMBL" id="AC005101">
    <property type="protein sequence ID" value="AAP22330.1"/>
    <property type="molecule type" value="Genomic_DNA"/>
</dbReference>
<dbReference type="EMBL" id="AC000121">
    <property type="protein sequence ID" value="AAB46357.2"/>
    <property type="molecule type" value="Genomic_DNA"/>
</dbReference>
<dbReference type="EMBL" id="AC006316">
    <property type="protein sequence ID" value="AAD29127.1"/>
    <property type="molecule type" value="Genomic_DNA"/>
</dbReference>
<dbReference type="EMBL" id="AC005064">
    <property type="status" value="NOT_ANNOTATED_CDS"/>
    <property type="molecule type" value="Genomic_DNA"/>
</dbReference>
<dbReference type="EMBL" id="CH236947">
    <property type="protein sequence ID" value="EAL24410.1"/>
    <property type="molecule type" value="Genomic_DNA"/>
</dbReference>
<dbReference type="EMBL" id="CH236947">
    <property type="protein sequence ID" value="EAL24411.1"/>
    <property type="molecule type" value="Genomic_DNA"/>
</dbReference>
<dbReference type="CCDS" id="CCDS34722.1">
    <molecule id="P78509-2"/>
</dbReference>
<dbReference type="CCDS" id="CCDS47680.1">
    <molecule id="P78509-1"/>
</dbReference>
<dbReference type="RefSeq" id="NP_005036.2">
    <molecule id="P78509-1"/>
    <property type="nucleotide sequence ID" value="NM_005045.3"/>
</dbReference>
<dbReference type="RefSeq" id="NP_774959.1">
    <molecule id="P78509-2"/>
    <property type="nucleotide sequence ID" value="NM_173054.3"/>
</dbReference>
<dbReference type="PDB" id="8G21">
    <property type="method" value="NMR"/>
    <property type="chains" value="A=3429-3460"/>
</dbReference>
<dbReference type="PDBsum" id="8G21"/>
<dbReference type="SMR" id="P78509"/>
<dbReference type="BioGRID" id="111630">
    <property type="interactions" value="19"/>
</dbReference>
<dbReference type="ComplexPortal" id="CPX-4424">
    <property type="entry name" value="Reelin complex"/>
</dbReference>
<dbReference type="FunCoup" id="P78509">
    <property type="interactions" value="681"/>
</dbReference>
<dbReference type="IntAct" id="P78509">
    <property type="interactions" value="2"/>
</dbReference>
<dbReference type="STRING" id="9606.ENSP00000392423"/>
<dbReference type="TCDB" id="9.B.87.1.47">
    <property type="family name" value="the selenoprotein p receptor (selp-receptor) family"/>
</dbReference>
<dbReference type="GlyConnect" id="1972">
    <property type="glycosylation" value="11 N-Linked glycans (6 sites)"/>
</dbReference>
<dbReference type="GlyCosmos" id="P78509">
    <property type="glycosylation" value="21 sites, 13 glycans"/>
</dbReference>
<dbReference type="GlyGen" id="P78509">
    <property type="glycosylation" value="22 sites, 16 N-linked glycans (7 sites), 4 O-linked glycans (2 sites)"/>
</dbReference>
<dbReference type="iPTMnet" id="P78509"/>
<dbReference type="PhosphoSitePlus" id="P78509"/>
<dbReference type="BioMuta" id="RELN"/>
<dbReference type="DMDM" id="296452988"/>
<dbReference type="jPOST" id="P78509"/>
<dbReference type="MassIVE" id="P78509"/>
<dbReference type="PaxDb" id="9606-ENSP00000392423"/>
<dbReference type="PeptideAtlas" id="P78509"/>
<dbReference type="ProteomicsDB" id="57628">
    <molecule id="P78509-1"/>
</dbReference>
<dbReference type="ProteomicsDB" id="57629">
    <molecule id="P78509-2"/>
</dbReference>
<dbReference type="ProteomicsDB" id="57630">
    <molecule id="P78509-3"/>
</dbReference>
<dbReference type="Pumba" id="P78509"/>
<dbReference type="Antibodypedia" id="3876">
    <property type="antibodies" value="216 antibodies from 29 providers"/>
</dbReference>
<dbReference type="DNASU" id="5649"/>
<dbReference type="Ensembl" id="ENST00000343529.9">
    <molecule id="P78509-2"/>
    <property type="protein sequence ID" value="ENSP00000345694.5"/>
    <property type="gene ID" value="ENSG00000189056.15"/>
</dbReference>
<dbReference type="Ensembl" id="ENST00000428762.6">
    <molecule id="P78509-1"/>
    <property type="protein sequence ID" value="ENSP00000392423.1"/>
    <property type="gene ID" value="ENSG00000189056.15"/>
</dbReference>
<dbReference type="GeneID" id="5649"/>
<dbReference type="KEGG" id="hsa:5649"/>
<dbReference type="MANE-Select" id="ENST00000428762.6">
    <property type="protein sequence ID" value="ENSP00000392423.1"/>
    <property type="RefSeq nucleotide sequence ID" value="NM_005045.4"/>
    <property type="RefSeq protein sequence ID" value="NP_005036.2"/>
</dbReference>
<dbReference type="UCSC" id="uc010liz.3">
    <molecule id="P78509-1"/>
    <property type="organism name" value="human"/>
</dbReference>
<dbReference type="AGR" id="HGNC:9957"/>
<dbReference type="CTD" id="5649"/>
<dbReference type="DisGeNET" id="5649"/>
<dbReference type="GeneCards" id="RELN"/>
<dbReference type="GeneReviews" id="RELN"/>
<dbReference type="HGNC" id="HGNC:9957">
    <property type="gene designation" value="RELN"/>
</dbReference>
<dbReference type="HPA" id="ENSG00000189056">
    <property type="expression patterns" value="Tissue enriched (brain)"/>
</dbReference>
<dbReference type="MalaCards" id="RELN"/>
<dbReference type="MIM" id="257320">
    <property type="type" value="phenotype"/>
</dbReference>
<dbReference type="MIM" id="600514">
    <property type="type" value="gene"/>
</dbReference>
<dbReference type="MIM" id="616436">
    <property type="type" value="phenotype"/>
</dbReference>
<dbReference type="neXtProt" id="NX_P78509"/>
<dbReference type="OpenTargets" id="ENSG00000189056"/>
<dbReference type="Orphanet" id="101046">
    <property type="disease" value="Epilepsy with auditory features"/>
</dbReference>
<dbReference type="Orphanet" id="89844">
    <property type="disease" value="Lissencephaly syndrome, Norman-Roberts type"/>
</dbReference>
<dbReference type="PharmGKB" id="PA34323"/>
<dbReference type="VEuPathDB" id="HostDB:ENSG00000189056"/>
<dbReference type="eggNOG" id="ENOG502QSIP">
    <property type="taxonomic scope" value="Eukaryota"/>
</dbReference>
<dbReference type="GeneTree" id="ENSGT00580000081623"/>
<dbReference type="HOGENOM" id="CLU_000468_0_0_1"/>
<dbReference type="InParanoid" id="P78509"/>
<dbReference type="OMA" id="ATIKHAC"/>
<dbReference type="OrthoDB" id="1924787at2759"/>
<dbReference type="PAN-GO" id="P78509">
    <property type="GO annotations" value="5 GO annotations based on evolutionary models"/>
</dbReference>
<dbReference type="PhylomeDB" id="P78509"/>
<dbReference type="TreeFam" id="TF106479"/>
<dbReference type="PathwayCommons" id="P78509"/>
<dbReference type="Reactome" id="R-HSA-8866376">
    <property type="pathway name" value="Reelin signalling pathway"/>
</dbReference>
<dbReference type="SignaLink" id="P78509"/>
<dbReference type="SIGNOR" id="P78509"/>
<dbReference type="BioGRID-ORCS" id="5649">
    <property type="hits" value="7 hits in 1156 CRISPR screens"/>
</dbReference>
<dbReference type="ChiTaRS" id="RELN">
    <property type="organism name" value="human"/>
</dbReference>
<dbReference type="GeneWiki" id="Reelin"/>
<dbReference type="GenomeRNAi" id="5649"/>
<dbReference type="Pharos" id="P78509">
    <property type="development level" value="Tbio"/>
</dbReference>
<dbReference type="PRO" id="PR:P78509"/>
<dbReference type="Proteomes" id="UP000005640">
    <property type="component" value="Chromosome 7"/>
</dbReference>
<dbReference type="RNAct" id="P78509">
    <property type="molecule type" value="protein"/>
</dbReference>
<dbReference type="Bgee" id="ENSG00000189056">
    <property type="expression patterns" value="Expressed in olfactory bulb and 187 other cell types or tissues"/>
</dbReference>
<dbReference type="ExpressionAtlas" id="P78509">
    <property type="expression patterns" value="baseline and differential"/>
</dbReference>
<dbReference type="GO" id="GO:0005737">
    <property type="term" value="C:cytoplasm"/>
    <property type="evidence" value="ECO:0000250"/>
    <property type="project" value="UniProtKB"/>
</dbReference>
<dbReference type="GO" id="GO:0030425">
    <property type="term" value="C:dendrite"/>
    <property type="evidence" value="ECO:0000250"/>
    <property type="project" value="UniProtKB"/>
</dbReference>
<dbReference type="GO" id="GO:0031012">
    <property type="term" value="C:extracellular matrix"/>
    <property type="evidence" value="ECO:0007669"/>
    <property type="project" value="Ensembl"/>
</dbReference>
<dbReference type="GO" id="GO:0005576">
    <property type="term" value="C:extracellular region"/>
    <property type="evidence" value="ECO:0000304"/>
    <property type="project" value="Reactome"/>
</dbReference>
<dbReference type="GO" id="GO:0005615">
    <property type="term" value="C:extracellular space"/>
    <property type="evidence" value="ECO:0000250"/>
    <property type="project" value="UniProtKB"/>
</dbReference>
<dbReference type="GO" id="GO:0043005">
    <property type="term" value="C:neuron projection"/>
    <property type="evidence" value="ECO:0000318"/>
    <property type="project" value="GO_Central"/>
</dbReference>
<dbReference type="GO" id="GO:0005886">
    <property type="term" value="C:plasma membrane"/>
    <property type="evidence" value="ECO:0007669"/>
    <property type="project" value="GOC"/>
</dbReference>
<dbReference type="GO" id="GO:0110157">
    <property type="term" value="C:reelin complex"/>
    <property type="evidence" value="ECO:0000314"/>
    <property type="project" value="ComplexPortal"/>
</dbReference>
<dbReference type="GO" id="GO:0070325">
    <property type="term" value="F:lipoprotein particle receptor binding"/>
    <property type="evidence" value="ECO:0000250"/>
    <property type="project" value="BHF-UCL"/>
</dbReference>
<dbReference type="GO" id="GO:0046872">
    <property type="term" value="F:metal ion binding"/>
    <property type="evidence" value="ECO:0007669"/>
    <property type="project" value="UniProtKB-KW"/>
</dbReference>
<dbReference type="GO" id="GO:0048018">
    <property type="term" value="F:receptor ligand activity"/>
    <property type="evidence" value="ECO:0000250"/>
    <property type="project" value="BHF-UCL"/>
</dbReference>
<dbReference type="GO" id="GO:0008236">
    <property type="term" value="F:serine-type peptidase activity"/>
    <property type="evidence" value="ECO:0000250"/>
    <property type="project" value="UniProtKB"/>
</dbReference>
<dbReference type="GO" id="GO:0070326">
    <property type="term" value="F:very-low-density lipoprotein particle receptor binding"/>
    <property type="evidence" value="ECO:0000250"/>
    <property type="project" value="BHF-UCL"/>
</dbReference>
<dbReference type="GO" id="GO:0008306">
    <property type="term" value="P:associative learning"/>
    <property type="evidence" value="ECO:0000250"/>
    <property type="project" value="BHF-UCL"/>
</dbReference>
<dbReference type="GO" id="GO:0007411">
    <property type="term" value="P:axon guidance"/>
    <property type="evidence" value="ECO:0000250"/>
    <property type="project" value="UniProtKB"/>
</dbReference>
<dbReference type="GO" id="GO:0007420">
    <property type="term" value="P:brain development"/>
    <property type="evidence" value="ECO:0000250"/>
    <property type="project" value="UniProtKB"/>
</dbReference>
<dbReference type="GO" id="GO:0007155">
    <property type="term" value="P:cell adhesion"/>
    <property type="evidence" value="ECO:0007669"/>
    <property type="project" value="UniProtKB-KW"/>
</dbReference>
<dbReference type="GO" id="GO:0000902">
    <property type="term" value="P:cell morphogenesis"/>
    <property type="evidence" value="ECO:0000250"/>
    <property type="project" value="UniProtKB"/>
</dbReference>
<dbReference type="GO" id="GO:0007417">
    <property type="term" value="P:central nervous system development"/>
    <property type="evidence" value="ECO:0000250"/>
    <property type="project" value="UniProtKB"/>
</dbReference>
<dbReference type="GO" id="GO:0021800">
    <property type="term" value="P:cerebral cortex tangential migration"/>
    <property type="evidence" value="ECO:0000250"/>
    <property type="project" value="UniProtKB"/>
</dbReference>
<dbReference type="GO" id="GO:0016358">
    <property type="term" value="P:dendrite development"/>
    <property type="evidence" value="ECO:0007669"/>
    <property type="project" value="Ensembl"/>
</dbReference>
<dbReference type="GO" id="GO:0010001">
    <property type="term" value="P:glial cell differentiation"/>
    <property type="evidence" value="ECO:0000250"/>
    <property type="project" value="UniProtKB"/>
</dbReference>
<dbReference type="GO" id="GO:0021766">
    <property type="term" value="P:hippocampus development"/>
    <property type="evidence" value="ECO:0000250"/>
    <property type="project" value="BHF-UCL"/>
</dbReference>
<dbReference type="GO" id="GO:1904936">
    <property type="term" value="P:interneuron migration"/>
    <property type="evidence" value="ECO:0007669"/>
    <property type="project" value="Ensembl"/>
</dbReference>
<dbReference type="GO" id="GO:0097477">
    <property type="term" value="P:lateral motor column neuron migration"/>
    <property type="evidence" value="ECO:0007669"/>
    <property type="project" value="Ensembl"/>
</dbReference>
<dbReference type="GO" id="GO:0021819">
    <property type="term" value="P:layer formation in cerebral cortex"/>
    <property type="evidence" value="ECO:0000250"/>
    <property type="project" value="UniProtKB"/>
</dbReference>
<dbReference type="GO" id="GO:0007626">
    <property type="term" value="P:locomotory behavior"/>
    <property type="evidence" value="ECO:0007669"/>
    <property type="project" value="Ensembl"/>
</dbReference>
<dbReference type="GO" id="GO:0007616">
    <property type="term" value="P:long-term memory"/>
    <property type="evidence" value="ECO:0000250"/>
    <property type="project" value="BHF-UCL"/>
</dbReference>
<dbReference type="GO" id="GO:0060291">
    <property type="term" value="P:long-term synaptic potentiation"/>
    <property type="evidence" value="ECO:0007669"/>
    <property type="project" value="Ensembl"/>
</dbReference>
<dbReference type="GO" id="GO:0050804">
    <property type="term" value="P:modulation of chemical synaptic transmission"/>
    <property type="evidence" value="ECO:0000250"/>
    <property type="project" value="BHF-UCL"/>
</dbReference>
<dbReference type="GO" id="GO:0001764">
    <property type="term" value="P:neuron migration"/>
    <property type="evidence" value="ECO:0000250"/>
    <property type="project" value="UniProtKB"/>
</dbReference>
<dbReference type="GO" id="GO:0097114">
    <property type="term" value="P:NMDA glutamate receptor clustering"/>
    <property type="evidence" value="ECO:0000250"/>
    <property type="project" value="BHF-UCL"/>
</dbReference>
<dbReference type="GO" id="GO:0061003">
    <property type="term" value="P:positive regulation of dendritic spine morphogenesis"/>
    <property type="evidence" value="ECO:0000250"/>
    <property type="project" value="BHF-UCL"/>
</dbReference>
<dbReference type="GO" id="GO:2000463">
    <property type="term" value="P:positive regulation of excitatory postsynaptic potential"/>
    <property type="evidence" value="ECO:0000250"/>
    <property type="project" value="BHF-UCL"/>
</dbReference>
<dbReference type="GO" id="GO:1902078">
    <property type="term" value="P:positive regulation of lateral motor column neuron migration"/>
    <property type="evidence" value="ECO:0007669"/>
    <property type="project" value="Ensembl"/>
</dbReference>
<dbReference type="GO" id="GO:1900273">
    <property type="term" value="P:positive regulation of long-term synaptic potentiation"/>
    <property type="evidence" value="ECO:0000250"/>
    <property type="project" value="BHF-UCL"/>
</dbReference>
<dbReference type="GO" id="GO:0010976">
    <property type="term" value="P:positive regulation of neuron projection development"/>
    <property type="evidence" value="ECO:0000250"/>
    <property type="project" value="BHF-UCL"/>
</dbReference>
<dbReference type="GO" id="GO:0051897">
    <property type="term" value="P:positive regulation of phosphatidylinositol 3-kinase/protein kinase B signal transduction"/>
    <property type="evidence" value="ECO:0000250"/>
    <property type="project" value="BHF-UCL"/>
</dbReference>
<dbReference type="GO" id="GO:0051057">
    <property type="term" value="P:positive regulation of small GTPase mediated signal transduction"/>
    <property type="evidence" value="ECO:0000250"/>
    <property type="project" value="UniProtKB"/>
</dbReference>
<dbReference type="GO" id="GO:0090129">
    <property type="term" value="P:positive regulation of synapse maturation"/>
    <property type="evidence" value="ECO:0000250"/>
    <property type="project" value="BHF-UCL"/>
</dbReference>
<dbReference type="GO" id="GO:0051968">
    <property type="term" value="P:positive regulation of synaptic transmission, glutamatergic"/>
    <property type="evidence" value="ECO:0000250"/>
    <property type="project" value="BHF-UCL"/>
</dbReference>
<dbReference type="GO" id="GO:0032008">
    <property type="term" value="P:positive regulation of TOR signaling"/>
    <property type="evidence" value="ECO:0000250"/>
    <property type="project" value="BHF-UCL"/>
</dbReference>
<dbReference type="GO" id="GO:0097107">
    <property type="term" value="P:postsynaptic density assembly"/>
    <property type="evidence" value="ECO:0000250"/>
    <property type="project" value="BHF-UCL"/>
</dbReference>
<dbReference type="GO" id="GO:0097119">
    <property type="term" value="P:postsynaptic density protein 95 clustering"/>
    <property type="evidence" value="ECO:0000250"/>
    <property type="project" value="BHF-UCL"/>
</dbReference>
<dbReference type="GO" id="GO:0035418">
    <property type="term" value="P:protein localization to synapse"/>
    <property type="evidence" value="ECO:0000250"/>
    <property type="project" value="BHF-UCL"/>
</dbReference>
<dbReference type="GO" id="GO:0006508">
    <property type="term" value="P:proteolysis"/>
    <property type="evidence" value="ECO:0007669"/>
    <property type="project" value="UniProtKB-KW"/>
</dbReference>
<dbReference type="GO" id="GO:0097120">
    <property type="term" value="P:receptor localization to synapse"/>
    <property type="evidence" value="ECO:0000250"/>
    <property type="project" value="BHF-UCL"/>
</dbReference>
<dbReference type="GO" id="GO:0038026">
    <property type="term" value="P:reelin-mediated signaling pathway"/>
    <property type="evidence" value="ECO:0000250"/>
    <property type="project" value="UniProtKB"/>
</dbReference>
<dbReference type="GO" id="GO:0050795">
    <property type="term" value="P:regulation of behavior"/>
    <property type="evidence" value="ECO:0000250"/>
    <property type="project" value="BHF-UCL"/>
</dbReference>
<dbReference type="GO" id="GO:0010468">
    <property type="term" value="P:regulation of gene expression"/>
    <property type="evidence" value="ECO:0007669"/>
    <property type="project" value="Ensembl"/>
</dbReference>
<dbReference type="GO" id="GO:0045664">
    <property type="term" value="P:regulation of neuron differentiation"/>
    <property type="evidence" value="ECO:0000303"/>
    <property type="project" value="ComplexPortal"/>
</dbReference>
<dbReference type="GO" id="GO:2001222">
    <property type="term" value="P:regulation of neuron migration"/>
    <property type="evidence" value="ECO:0000303"/>
    <property type="project" value="ComplexPortal"/>
</dbReference>
<dbReference type="GO" id="GO:0060025">
    <property type="term" value="P:regulation of synaptic activity"/>
    <property type="evidence" value="ECO:0000303"/>
    <property type="project" value="ComplexPortal"/>
</dbReference>
<dbReference type="GO" id="GO:0048265">
    <property type="term" value="P:response to pain"/>
    <property type="evidence" value="ECO:0000250"/>
    <property type="project" value="UniProtKB"/>
</dbReference>
<dbReference type="GO" id="GO:0021511">
    <property type="term" value="P:spinal cord patterning"/>
    <property type="evidence" value="ECO:0000250"/>
    <property type="project" value="UniProtKB"/>
</dbReference>
<dbReference type="GO" id="GO:0021517">
    <property type="term" value="P:ventral spinal cord development"/>
    <property type="evidence" value="ECO:0007669"/>
    <property type="project" value="Ensembl"/>
</dbReference>
<dbReference type="CDD" id="cd00054">
    <property type="entry name" value="EGF_CA"/>
    <property type="match status" value="1"/>
</dbReference>
<dbReference type="CDD" id="cd08544">
    <property type="entry name" value="Reeler"/>
    <property type="match status" value="1"/>
</dbReference>
<dbReference type="CDD" id="cd10037">
    <property type="entry name" value="Reelin_repeat_1_subrepeat_1"/>
    <property type="match status" value="1"/>
</dbReference>
<dbReference type="CDD" id="cd10045">
    <property type="entry name" value="Reelin_repeat_1_subrepeat_2"/>
    <property type="match status" value="1"/>
</dbReference>
<dbReference type="CDD" id="cd10038">
    <property type="entry name" value="Reelin_repeat_2_subrepeat_1"/>
    <property type="match status" value="1"/>
</dbReference>
<dbReference type="CDD" id="cd10046">
    <property type="entry name" value="Reelin_repeat_2_subrepeat_2"/>
    <property type="match status" value="1"/>
</dbReference>
<dbReference type="CDD" id="cd10039">
    <property type="entry name" value="Reelin_repeat_3_subrepeat_1"/>
    <property type="match status" value="1"/>
</dbReference>
<dbReference type="CDD" id="cd10047">
    <property type="entry name" value="Reelin_repeat_3_subrepeat_2"/>
    <property type="match status" value="1"/>
</dbReference>
<dbReference type="CDD" id="cd10040">
    <property type="entry name" value="Reelin_repeat_4_subrepeat_1"/>
    <property type="match status" value="1"/>
</dbReference>
<dbReference type="CDD" id="cd10048">
    <property type="entry name" value="Reelin_repeat_4_subrepeat_2"/>
    <property type="match status" value="1"/>
</dbReference>
<dbReference type="CDD" id="cd10041">
    <property type="entry name" value="Reelin_repeat_5_subrepeat_1"/>
    <property type="match status" value="1"/>
</dbReference>
<dbReference type="CDD" id="cd10049">
    <property type="entry name" value="Reelin_repeat_5_subrepeat_2"/>
    <property type="match status" value="1"/>
</dbReference>
<dbReference type="CDD" id="cd10042">
    <property type="entry name" value="Reelin_repeat_6_subrepeat_1"/>
    <property type="match status" value="1"/>
</dbReference>
<dbReference type="CDD" id="cd10050">
    <property type="entry name" value="Reelin_repeat_6_subrepeat_2"/>
    <property type="match status" value="1"/>
</dbReference>
<dbReference type="CDD" id="cd10043">
    <property type="entry name" value="Reelin_repeat_7_subrepeat_1"/>
    <property type="match status" value="1"/>
</dbReference>
<dbReference type="CDD" id="cd10051">
    <property type="entry name" value="Reelin_repeat_7_subrepeat_2"/>
    <property type="match status" value="1"/>
</dbReference>
<dbReference type="CDD" id="cd10044">
    <property type="entry name" value="Reelin_repeat_8_subrepeat_1"/>
    <property type="match status" value="1"/>
</dbReference>
<dbReference type="CDD" id="cd10052">
    <property type="entry name" value="Reelin_repeat_8_subrepeat_2"/>
    <property type="match status" value="1"/>
</dbReference>
<dbReference type="CDD" id="cd10036">
    <property type="entry name" value="Reelin_subrepeat_Nt"/>
    <property type="match status" value="1"/>
</dbReference>
<dbReference type="FunFam" id="2.60.120.260:FF:000003">
    <property type="entry name" value="Reelin"/>
    <property type="match status" value="4"/>
</dbReference>
<dbReference type="FunFam" id="2.60.120.260:FF:000028">
    <property type="entry name" value="Reelin"/>
    <property type="match status" value="1"/>
</dbReference>
<dbReference type="FunFam" id="2.60.120.260:FF:000030">
    <property type="entry name" value="Reelin"/>
    <property type="match status" value="1"/>
</dbReference>
<dbReference type="FunFam" id="2.60.120.260:FF:000036">
    <property type="entry name" value="Reelin"/>
    <property type="match status" value="1"/>
</dbReference>
<dbReference type="FunFam" id="2.60.120.260:FF:000039">
    <property type="entry name" value="Reelin"/>
    <property type="match status" value="1"/>
</dbReference>
<dbReference type="FunFam" id="2.60.120.260:FF:000040">
    <property type="entry name" value="Reelin"/>
    <property type="match status" value="1"/>
</dbReference>
<dbReference type="FunFam" id="2.60.120.260:FF:000041">
    <property type="entry name" value="Reelin"/>
    <property type="match status" value="1"/>
</dbReference>
<dbReference type="FunFam" id="2.60.120.260:FF:000042">
    <property type="entry name" value="Reelin"/>
    <property type="match status" value="1"/>
</dbReference>
<dbReference type="FunFam" id="2.60.120.260:FF:000044">
    <property type="entry name" value="Reelin"/>
    <property type="match status" value="1"/>
</dbReference>
<dbReference type="FunFam" id="2.60.120.260:FF:000045">
    <property type="entry name" value="Reelin"/>
    <property type="match status" value="1"/>
</dbReference>
<dbReference type="FunFam" id="2.60.120.260:FF:000047">
    <property type="entry name" value="Reelin"/>
    <property type="match status" value="1"/>
</dbReference>
<dbReference type="FunFam" id="2.60.120.260:FF:000052">
    <property type="entry name" value="Reelin"/>
    <property type="match status" value="1"/>
</dbReference>
<dbReference type="FunFam" id="2.60.120.260:FF:000053">
    <property type="entry name" value="Reelin"/>
    <property type="match status" value="1"/>
</dbReference>
<dbReference type="FunFam" id="2.60.120.260:FF:000055">
    <property type="entry name" value="Reelin"/>
    <property type="match status" value="1"/>
</dbReference>
<dbReference type="FunFam" id="2.60.120.260:FF:000057">
    <property type="entry name" value="Reelin"/>
    <property type="match status" value="1"/>
</dbReference>
<dbReference type="FunFam" id="2.60.40.4060:FF:000001">
    <property type="entry name" value="Reelin"/>
    <property type="match status" value="1"/>
</dbReference>
<dbReference type="FunFam" id="2.60.120.260:FF:000056">
    <property type="entry name" value="reelin"/>
    <property type="match status" value="1"/>
</dbReference>
<dbReference type="Gene3D" id="2.60.120.260">
    <property type="entry name" value="Galactose-binding domain-like"/>
    <property type="match status" value="19"/>
</dbReference>
<dbReference type="Gene3D" id="2.60.40.4060">
    <property type="entry name" value="Reeler domain"/>
    <property type="match status" value="1"/>
</dbReference>
<dbReference type="InterPro" id="IPR000742">
    <property type="entry name" value="EGF-like_dom"/>
</dbReference>
<dbReference type="InterPro" id="IPR013111">
    <property type="entry name" value="EGF_extracell"/>
</dbReference>
<dbReference type="InterPro" id="IPR002861">
    <property type="entry name" value="Reeler_dom"/>
</dbReference>
<dbReference type="InterPro" id="IPR042307">
    <property type="entry name" value="Reeler_sf"/>
</dbReference>
<dbReference type="InterPro" id="IPR034968">
    <property type="entry name" value="Reelin"/>
</dbReference>
<dbReference type="InterPro" id="IPR049419">
    <property type="entry name" value="Reelin_subrepeat-B"/>
</dbReference>
<dbReference type="InterPro" id="IPR036278">
    <property type="entry name" value="Sialidase_sf"/>
</dbReference>
<dbReference type="PANTHER" id="PTHR11841">
    <property type="entry name" value="REELIN"/>
    <property type="match status" value="1"/>
</dbReference>
<dbReference type="PANTHER" id="PTHR11841:SF1">
    <property type="entry name" value="REELIN"/>
    <property type="match status" value="1"/>
</dbReference>
<dbReference type="Pfam" id="PF07974">
    <property type="entry name" value="EGF_2"/>
    <property type="match status" value="1"/>
</dbReference>
<dbReference type="Pfam" id="PF23106">
    <property type="entry name" value="EGF_Teneurin"/>
    <property type="match status" value="2"/>
</dbReference>
<dbReference type="Pfam" id="PF21471">
    <property type="entry name" value="Reelin_subrepeat-B"/>
    <property type="match status" value="18"/>
</dbReference>
<dbReference type="SMART" id="SM00181">
    <property type="entry name" value="EGF"/>
    <property type="match status" value="8"/>
</dbReference>
<dbReference type="SUPFAM" id="SSF50939">
    <property type="entry name" value="Sialidases"/>
    <property type="match status" value="4"/>
</dbReference>
<dbReference type="PROSITE" id="PS00022">
    <property type="entry name" value="EGF_1"/>
    <property type="match status" value="7"/>
</dbReference>
<dbReference type="PROSITE" id="PS01186">
    <property type="entry name" value="EGF_2"/>
    <property type="match status" value="6"/>
</dbReference>
<dbReference type="PROSITE" id="PS50026">
    <property type="entry name" value="EGF_3"/>
    <property type="match status" value="5"/>
</dbReference>
<dbReference type="PROSITE" id="PS51019">
    <property type="entry name" value="REELIN"/>
    <property type="match status" value="1"/>
</dbReference>
<comment type="function">
    <text evidence="1">Extracellular matrix serine protease secreted by pioneer neurons that plays a role in layering of neurons in the cerebral cortex and cerebellum by coordinating cell positioning during neurodevelopment. Regulates microtubule function in neurons and neuronal migration. Binding to the extracellular domains of lipoprotein receptors VLDLR and LRP8/APOER2 induces tyrosine phosphorylation of DAB1 and modulation of TAU phosphorylation. Affects migration of sympathetic preganglionic neurons in the spinal cord, where it seems to act as a barrier to neuronal migration. Enzymatic activity is important for the modulation of cell adhesion.</text>
</comment>
<comment type="subunit">
    <text evidence="1">Oligomer of disulfide-linked homodimers.</text>
</comment>
<comment type="subcellular location">
    <subcellularLocation>
        <location evidence="1">Secreted</location>
        <location evidence="1">Extracellular space</location>
        <location evidence="1">Extracellular matrix</location>
    </subcellularLocation>
</comment>
<comment type="alternative products">
    <event type="alternative splicing"/>
    <isoform>
        <id>P78509-1</id>
        <name>1</name>
        <sequence type="displayed"/>
    </isoform>
    <isoform>
        <id>P78509-2</id>
        <name>2</name>
        <sequence type="described" ref="VSP_005575"/>
    </isoform>
    <isoform>
        <id>P78509-3</id>
        <name>3</name>
        <sequence type="described" ref="VSP_005576"/>
    </isoform>
</comment>
<comment type="tissue specificity">
    <text evidence="10">Abundantly produced during brain ontogenesis by the Cajal-Retzius cells and other pioneer neurons located in the telencephalic marginal zone and by granule cells of the external granular layer of the cerebellum. In adult brain, preferentially expressed in GABAergic interneurons of prefrontal cortices, temporal cortex, hippocampus and glutamatergic granule cells of cerebellum. Expression is reduced to about 50% in patients with schizophrenia. Also expressed in fetal and adult liver.</text>
</comment>
<comment type="developmental stage">
    <text evidence="9">Expressed in fetal and postnatal brain and liver. Expression in postnatal human brain is high in the cerebellum.</text>
</comment>
<comment type="domain">
    <text evidence="1">The basic C-terminal region is essential for secretion.</text>
</comment>
<comment type="PTM">
    <text evidence="1">N-glycosylated and to a lesser extent also O-glycosylated.</text>
</comment>
<comment type="polymorphism">
    <text evidence="6">A polymorphic GGC triplet repeat located in the 5'-UTR region of RELN gene, which harbors in the normal population 8 to 10 repeats, is significantly increased in autistic patients to carry 4 to 23 additional repeats.</text>
</comment>
<comment type="disease" evidence="5">
    <disease id="DI-00671">
        <name>Lissencephaly 2</name>
        <acronym>LIS2</acronym>
        <description>A classic type lissencephaly associated with ataxia, intellectual disability, seizures and abnormalities of the cerebellum, hippocampus and brainstem.</description>
        <dbReference type="MIM" id="257320"/>
    </disease>
    <text>The disease is caused by variants affecting the gene represented in this entry.</text>
</comment>
<comment type="disease" evidence="8">
    <disease id="DI-04463">
        <name>Epilepsy, familial temporal lobe, 7</name>
        <acronym>ETL7</acronym>
        <description>A focal form of epilepsy characterized by recurrent seizures that arise from foci within the temporal lobe. Seizures are usually accompanied by sensory symptoms, most often auditory in nature.</description>
        <dbReference type="MIM" id="616436"/>
    </disease>
    <text>The disease is caused by variants affecting the gene represented in this entry.</text>
</comment>
<comment type="similarity">
    <text evidence="12">Belongs to the reelin family.</text>
</comment>
<comment type="online information" name="Wikipedia">
    <link uri="https://en.wikipedia.org/wiki/Reelin"/>
    <text>Reelin entry</text>
</comment>
<gene>
    <name type="primary">RELN</name>
</gene>
<feature type="signal peptide" evidence="2">
    <location>
        <begin position="1"/>
        <end position="25"/>
    </location>
</feature>
<feature type="chain" id="PRO_0000030304" description="Reelin">
    <location>
        <begin position="26"/>
        <end position="3460"/>
    </location>
</feature>
<feature type="domain" description="Reelin" evidence="4">
    <location>
        <begin position="26"/>
        <end position="190"/>
    </location>
</feature>
<feature type="repeat" description="BNR 1">
    <location>
        <begin position="592"/>
        <end position="603"/>
    </location>
</feature>
<feature type="domain" description="EGF-like 1" evidence="3">
    <location>
        <begin position="670"/>
        <end position="701"/>
    </location>
</feature>
<feature type="repeat" description="BNR 2">
    <location>
        <begin position="798"/>
        <end position="809"/>
    </location>
</feature>
<feature type="repeat" description="BNR 3">
    <location>
        <begin position="951"/>
        <end position="962"/>
    </location>
</feature>
<feature type="domain" description="EGF-like 2" evidence="3">
    <location>
        <begin position="1029"/>
        <end position="1060"/>
    </location>
</feature>
<feature type="repeat" description="BNR 4">
    <location>
        <begin position="1156"/>
        <end position="1167"/>
    </location>
</feature>
<feature type="repeat" description="BNR 5">
    <location>
        <begin position="1322"/>
        <end position="1333"/>
    </location>
</feature>
<feature type="domain" description="EGF-like 3" evidence="3">
    <location>
        <begin position="1408"/>
        <end position="1441"/>
    </location>
</feature>
<feature type="repeat" description="BNR 6">
    <location>
        <begin position="1534"/>
        <end position="1545"/>
    </location>
</feature>
<feature type="repeat" description="BNR 7">
    <location>
        <begin position="1685"/>
        <end position="1696"/>
    </location>
</feature>
<feature type="domain" description="EGF-like 4" evidence="3">
    <location>
        <begin position="1764"/>
        <end position="1795"/>
    </location>
</feature>
<feature type="repeat" description="BNR 8">
    <location>
        <begin position="1883"/>
        <end position="1894"/>
    </location>
</feature>
<feature type="repeat" description="BNR 9">
    <location>
        <begin position="2042"/>
        <end position="2053"/>
    </location>
</feature>
<feature type="domain" description="EGF-like 5" evidence="3">
    <location>
        <begin position="2128"/>
        <end position="2160"/>
    </location>
</feature>
<feature type="repeat" description="BNR 10">
    <location>
        <begin position="2249"/>
        <end position="2260"/>
    </location>
</feature>
<feature type="repeat" description="BNR 11">
    <location>
        <begin position="2398"/>
        <end position="2409"/>
    </location>
</feature>
<feature type="domain" description="EGF-like 6" evidence="3">
    <location>
        <begin position="2477"/>
        <end position="2508"/>
    </location>
</feature>
<feature type="repeat" description="BNR 12">
    <location>
        <begin position="2597"/>
        <end position="2608"/>
    </location>
</feature>
<feature type="repeat" description="BNR 13">
    <location>
        <begin position="2777"/>
        <end position="2788"/>
    </location>
</feature>
<feature type="domain" description="EGF-like 7" evidence="3">
    <location>
        <begin position="2852"/>
        <end position="2883"/>
    </location>
</feature>
<feature type="repeat" description="BNR 14">
    <location>
        <begin position="2978"/>
        <end position="2989"/>
    </location>
</feature>
<feature type="repeat" description="BNR 15">
    <location>
        <begin position="3142"/>
        <end position="3154"/>
    </location>
</feature>
<feature type="domain" description="EGF-like 8" evidence="3">
    <location>
        <begin position="3227"/>
        <end position="3259"/>
    </location>
</feature>
<feature type="repeat" description="BNR 16">
    <location>
        <begin position="3362"/>
        <end position="3373"/>
    </location>
</feature>
<feature type="binding site" evidence="1">
    <location>
        <position position="2060"/>
    </location>
    <ligand>
        <name>Zn(2+)</name>
        <dbReference type="ChEBI" id="CHEBI:29105"/>
        <label>1</label>
    </ligand>
</feature>
<feature type="binding site" evidence="1">
    <location>
        <position position="2073"/>
    </location>
    <ligand>
        <name>Zn(2+)</name>
        <dbReference type="ChEBI" id="CHEBI:29105"/>
        <label>1</label>
    </ligand>
</feature>
<feature type="binding site" evidence="1">
    <location>
        <position position="2178"/>
    </location>
    <ligand>
        <name>Zn(2+)</name>
        <dbReference type="ChEBI" id="CHEBI:29105"/>
        <label>1</label>
    </ligand>
</feature>
<feature type="binding site" evidence="1">
    <location>
        <position position="2263"/>
    </location>
    <ligand>
        <name>Zn(2+)</name>
        <dbReference type="ChEBI" id="CHEBI:29105"/>
        <label>1</label>
    </ligand>
</feature>
<feature type="binding site" evidence="1">
    <location>
        <position position="2396"/>
    </location>
    <ligand>
        <name>Zn(2+)</name>
        <dbReference type="ChEBI" id="CHEBI:29105"/>
        <label>2</label>
    </ligand>
</feature>
<feature type="binding site" evidence="1">
    <location>
        <position position="2398"/>
    </location>
    <ligand>
        <name>Zn(2+)</name>
        <dbReference type="ChEBI" id="CHEBI:29105"/>
        <label>2</label>
    </ligand>
</feature>
<feature type="binding site" evidence="1">
    <location>
        <position position="2459"/>
    </location>
    <ligand>
        <name>Zn(2+)</name>
        <dbReference type="ChEBI" id="CHEBI:29105"/>
        <label>2</label>
    </ligand>
</feature>
<feature type="glycosylation site" description="N-linked (GlcNAc...) asparagine" evidence="2">
    <location>
        <position position="140"/>
    </location>
</feature>
<feature type="glycosylation site" description="N-linked (GlcNAc...) asparagine" evidence="2">
    <location>
        <position position="257"/>
    </location>
</feature>
<feature type="glycosylation site" description="N-linked (GlcNAc...) asparagine" evidence="2">
    <location>
        <position position="289"/>
    </location>
</feature>
<feature type="glycosylation site" description="N-linked (GlcNAc...) asparagine" evidence="7">
    <location>
        <position position="305"/>
    </location>
</feature>
<feature type="glycosylation site" description="N-linked (GlcNAc...) asparagine" evidence="2">
    <location>
        <position position="628"/>
    </location>
</feature>
<feature type="glycosylation site" description="N-linked (GlcNAc...) asparagine" evidence="2">
    <location>
        <position position="1266"/>
    </location>
</feature>
<feature type="glycosylation site" description="N-linked (GlcNAc...) asparagine" evidence="2">
    <location>
        <position position="1599"/>
    </location>
</feature>
<feature type="glycosylation site" description="N-linked (GlcNAc...) asparagine" evidence="2">
    <location>
        <position position="1749"/>
    </location>
</feature>
<feature type="glycosylation site" description="N-linked (GlcNAc...) asparagine" evidence="7">
    <location>
        <position position="1920"/>
    </location>
</feature>
<feature type="glycosylation site" description="N-linked (GlcNAc...) asparagine" evidence="2">
    <location>
        <position position="2144"/>
    </location>
</feature>
<feature type="glycosylation site" description="N-linked (GlcNAc...) asparagine" evidence="2">
    <location>
        <position position="2268"/>
    </location>
</feature>
<feature type="glycosylation site" description="N-linked (GlcNAc...) asparagine" evidence="2">
    <location>
        <position position="2316"/>
    </location>
</feature>
<feature type="glycosylation site" description="N-linked (GlcNAc...) asparagine" evidence="2">
    <location>
        <position position="2568"/>
    </location>
</feature>
<feature type="glycosylation site" description="N-linked (GlcNAc...) asparagine" evidence="2">
    <location>
        <position position="2961"/>
    </location>
</feature>
<feature type="glycosylation site" description="N-linked (GlcNAc...) asparagine" evidence="7">
    <location>
        <position position="3015"/>
    </location>
</feature>
<feature type="glycosylation site" description="N-linked (GlcNAc...) asparagine" evidence="2">
    <location>
        <position position="3072"/>
    </location>
</feature>
<feature type="glycosylation site" description="N-linked (GlcNAc...) asparagine" evidence="2">
    <location>
        <position position="3184"/>
    </location>
</feature>
<feature type="glycosylation site" description="N-linked (GlcNAc...) asparagine" evidence="2">
    <location>
        <position position="3411"/>
    </location>
</feature>
<feature type="glycosylation site" description="N-linked (GlcNAc...) asparagine" evidence="2">
    <location>
        <position position="3438"/>
    </location>
</feature>
<feature type="disulfide bond" evidence="3">
    <location>
        <begin position="40"/>
        <end position="126"/>
    </location>
</feature>
<feature type="disulfide bond" evidence="3">
    <location>
        <begin position="154"/>
        <end position="178"/>
    </location>
</feature>
<feature type="disulfide bond" evidence="3">
    <location>
        <begin position="539"/>
        <end position="580"/>
    </location>
</feature>
<feature type="disulfide bond" evidence="3">
    <location>
        <begin position="608"/>
        <end position="613"/>
    </location>
</feature>
<feature type="disulfide bond" evidence="3">
    <location>
        <begin position="674"/>
        <end position="684"/>
    </location>
</feature>
<feature type="disulfide bond" evidence="3">
    <location>
        <begin position="691"/>
        <end position="700"/>
    </location>
</feature>
<feature type="disulfide bond" evidence="3">
    <location>
        <begin position="894"/>
        <end position="936"/>
    </location>
</feature>
<feature type="disulfide bond" evidence="3">
    <location>
        <begin position="967"/>
        <end position="974"/>
    </location>
</feature>
<feature type="disulfide bond" evidence="3">
    <location>
        <begin position="1033"/>
        <end position="1043"/>
    </location>
</feature>
<feature type="disulfide bond" evidence="3">
    <location>
        <begin position="1050"/>
        <end position="1059"/>
    </location>
</feature>
<feature type="disulfide bond" evidence="3">
    <location>
        <begin position="1270"/>
        <end position="1309"/>
    </location>
</feature>
<feature type="disulfide bond" evidence="3">
    <location>
        <begin position="1338"/>
        <end position="1347"/>
    </location>
</feature>
<feature type="disulfide bond" evidence="3">
    <location>
        <begin position="1632"/>
        <end position="1672"/>
    </location>
</feature>
<feature type="disulfide bond" evidence="3">
    <location>
        <begin position="1701"/>
        <end position="1708"/>
    </location>
</feature>
<feature type="disulfide bond" description="Interchain" evidence="3">
    <location>
        <position position="2100"/>
    </location>
</feature>
<feature type="disulfide bond" evidence="3">
    <location>
        <begin position="2132"/>
        <end position="2142"/>
    </location>
</feature>
<feature type="disulfide bond" evidence="3">
    <location>
        <begin position="2136"/>
        <end position="2148"/>
    </location>
</feature>
<feature type="disulfide bond" evidence="3">
    <location>
        <begin position="2150"/>
        <end position="2159"/>
    </location>
</feature>
<feature type="disulfide bond" evidence="3">
    <location>
        <begin position="2194"/>
        <end position="2234"/>
    </location>
</feature>
<feature type="disulfide bond" evidence="3">
    <location>
        <begin position="2347"/>
        <end position="2386"/>
    </location>
</feature>
<feature type="disulfide bond" evidence="3">
    <location>
        <begin position="2392"/>
        <end position="2558"/>
    </location>
</feature>
<feature type="disulfide bond" evidence="3">
    <location>
        <begin position="2543"/>
        <end position="2583"/>
    </location>
</feature>
<feature type="disulfide bond" evidence="3">
    <location>
        <begin position="2793"/>
        <end position="2800"/>
    </location>
</feature>
<feature type="disulfide bond" evidence="3">
    <location>
        <begin position="2856"/>
        <end position="2866"/>
    </location>
</feature>
<feature type="disulfide bond" evidence="3">
    <location>
        <begin position="2860"/>
        <end position="2871"/>
    </location>
</feature>
<feature type="disulfide bond" evidence="3">
    <location>
        <begin position="2873"/>
        <end position="2882"/>
    </location>
</feature>
<feature type="disulfide bond" evidence="3">
    <location>
        <begin position="2918"/>
        <end position="2965"/>
    </location>
</feature>
<feature type="disulfide bond" evidence="3">
    <location>
        <begin position="3159"/>
        <end position="3169"/>
    </location>
</feature>
<feature type="disulfide bond" evidence="3">
    <location>
        <begin position="3231"/>
        <end position="3241"/>
    </location>
</feature>
<feature type="disulfide bond" evidence="3">
    <location>
        <begin position="3235"/>
        <end position="3247"/>
    </location>
</feature>
<feature type="disulfide bond" evidence="3">
    <location>
        <begin position="3249"/>
        <end position="3258"/>
    </location>
</feature>
<feature type="disulfide bond" evidence="3">
    <location>
        <begin position="3295"/>
        <end position="3345"/>
    </location>
</feature>
<feature type="splice variant" id="VSP_005576" description="In isoform 3." evidence="12">
    <location>
        <begin position="3428"/>
        <end position="3460"/>
    </location>
</feature>
<feature type="splice variant" id="VSP_005575" description="In isoform 2." evidence="12">
    <location>
        <begin position="3428"/>
        <end position="3429"/>
    </location>
</feature>
<feature type="sequence variant" id="VAR_073862" description="In ETL7; dbSNP:rs201044262." evidence="8">
    <original>P</original>
    <variation>L</variation>
    <location>
        <position position="672"/>
    </location>
</feature>
<feature type="sequence variant" id="VAR_073863" description="In ETL7; dbSNP:rs768119894." evidence="8">
    <original>Y</original>
    <variation>C</variation>
    <location>
        <position position="723"/>
    </location>
</feature>
<feature type="sequence variant" id="VAR_073864" description="In ETL7; dbSNP:rs794727998." evidence="8">
    <original>D</original>
    <variation>G</variation>
    <location>
        <position position="763"/>
    </location>
</feature>
<feature type="sequence variant" id="VAR_073865" description="In ETL7; dbSNP:rs794727996." evidence="8">
    <original>H</original>
    <variation>N</variation>
    <location>
        <position position="798"/>
    </location>
</feature>
<feature type="sequence variant" id="VAR_073866" description="In ETL7; dbSNP:rs797045000." evidence="8">
    <original>P</original>
    <variation>L</variation>
    <location>
        <position position="844"/>
    </location>
</feature>
<feature type="sequence variant" id="VAR_047977" description="In dbSNP:rs3025962.">
    <original>T</original>
    <variation>A</variation>
    <location>
        <position position="978"/>
    </location>
</feature>
<feature type="sequence variant" id="VAR_047978" description="In dbSNP:rs362691.">
    <original>L</original>
    <variation>V</variation>
    <location>
        <position position="997"/>
    </location>
</feature>
<feature type="sequence variant" id="VAR_057712" description="In dbSNP:rs2229860.">
    <original>P</original>
    <variation>R</variation>
    <location>
        <position position="1703"/>
    </location>
</feature>
<feature type="sequence variant" id="VAR_073867" description="In ETL7; dbSNP:rs794727997." evidence="8">
    <original>G</original>
    <variation>C</variation>
    <location>
        <position position="2783"/>
    </location>
</feature>
<feature type="sequence variant" id="VAR_073868" description="In ETL7; dbSNP:rs794727999." evidence="8">
    <original>E</original>
    <variation>K</variation>
    <location>
        <position position="3176"/>
    </location>
</feature>
<feature type="sequence conflict" description="In Ref. 1; AAC51105." evidence="12" ref="1">
    <original>D</original>
    <variation>E</variation>
    <location>
        <position position="752"/>
    </location>
</feature>
<feature type="helix" evidence="13">
    <location>
        <begin position="3431"/>
        <end position="3457"/>
    </location>
</feature>
<keyword id="KW-0002">3D-structure</keyword>
<keyword id="KW-0025">Alternative splicing</keyword>
<keyword id="KW-0106">Calcium</keyword>
<keyword id="KW-0130">Cell adhesion</keyword>
<keyword id="KW-0217">Developmental protein</keyword>
<keyword id="KW-0225">Disease variant</keyword>
<keyword id="KW-1015">Disulfide bond</keyword>
<keyword id="KW-0245">EGF-like domain</keyword>
<keyword id="KW-0887">Epilepsy</keyword>
<keyword id="KW-0272">Extracellular matrix</keyword>
<keyword id="KW-0325">Glycoprotein</keyword>
<keyword id="KW-0378">Hydrolase</keyword>
<keyword id="KW-0451">Lissencephaly</keyword>
<keyword id="KW-0479">Metal-binding</keyword>
<keyword id="KW-0645">Protease</keyword>
<keyword id="KW-1267">Proteomics identification</keyword>
<keyword id="KW-1185">Reference proteome</keyword>
<keyword id="KW-0677">Repeat</keyword>
<keyword id="KW-0964">Secreted</keyword>
<keyword id="KW-0720">Serine protease</keyword>
<keyword id="KW-0732">Signal</keyword>
<keyword id="KW-0862">Zinc</keyword>
<evidence type="ECO:0000250" key="1">
    <source>
        <dbReference type="UniProtKB" id="Q60841"/>
    </source>
</evidence>
<evidence type="ECO:0000255" key="2"/>
<evidence type="ECO:0000255" key="3">
    <source>
        <dbReference type="PROSITE-ProRule" id="PRU00076"/>
    </source>
</evidence>
<evidence type="ECO:0000255" key="4">
    <source>
        <dbReference type="PROSITE-ProRule" id="PRU00363"/>
    </source>
</evidence>
<evidence type="ECO:0000269" key="5">
    <source>
    </source>
</evidence>
<evidence type="ECO:0000269" key="6">
    <source>
    </source>
</evidence>
<evidence type="ECO:0000269" key="7">
    <source>
    </source>
</evidence>
<evidence type="ECO:0000269" key="8">
    <source>
    </source>
</evidence>
<evidence type="ECO:0000269" key="9">
    <source>
    </source>
</evidence>
<evidence type="ECO:0000269" key="10">
    <source>
    </source>
</evidence>
<evidence type="ECO:0000303" key="11">
    <source>
    </source>
</evidence>
<evidence type="ECO:0000305" key="12"/>
<evidence type="ECO:0007829" key="13">
    <source>
        <dbReference type="PDB" id="8G21"/>
    </source>
</evidence>
<reference key="1">
    <citation type="journal article" date="1997" name="Genome Res.">
        <title>The human reelin gene: isolation, sequencing, and mapping on chromosome 7.</title>
        <authorList>
            <person name="DeSilva U."/>
            <person name="D'Arcangelo G."/>
            <person name="Braden V.V."/>
            <person name="Chen J."/>
            <person name="Miao G.G."/>
            <person name="Curran T."/>
            <person name="Green E.D."/>
        </authorList>
    </citation>
    <scope>NUCLEOTIDE SEQUENCE [MRNA] (ISOFORM 1)</scope>
    <scope>DEVELOPMENTAL STAGE</scope>
</reference>
<reference key="2">
    <citation type="journal article" date="2003" name="Nature">
        <title>The DNA sequence of human chromosome 7.</title>
        <authorList>
            <person name="Hillier L.W."/>
            <person name="Fulton R.S."/>
            <person name="Fulton L.A."/>
            <person name="Graves T.A."/>
            <person name="Pepin K.H."/>
            <person name="Wagner-McPherson C."/>
            <person name="Layman D."/>
            <person name="Maas J."/>
            <person name="Jaeger S."/>
            <person name="Walker R."/>
            <person name="Wylie K."/>
            <person name="Sekhon M."/>
            <person name="Becker M.C."/>
            <person name="O'Laughlin M.D."/>
            <person name="Schaller M.E."/>
            <person name="Fewell G.A."/>
            <person name="Delehaunty K.D."/>
            <person name="Miner T.L."/>
            <person name="Nash W.E."/>
            <person name="Cordes M."/>
            <person name="Du H."/>
            <person name="Sun H."/>
            <person name="Edwards J."/>
            <person name="Bradshaw-Cordum H."/>
            <person name="Ali J."/>
            <person name="Andrews S."/>
            <person name="Isak A."/>
            <person name="Vanbrunt A."/>
            <person name="Nguyen C."/>
            <person name="Du F."/>
            <person name="Lamar B."/>
            <person name="Courtney L."/>
            <person name="Kalicki J."/>
            <person name="Ozersky P."/>
            <person name="Bielicki L."/>
            <person name="Scott K."/>
            <person name="Holmes A."/>
            <person name="Harkins R."/>
            <person name="Harris A."/>
            <person name="Strong C.M."/>
            <person name="Hou S."/>
            <person name="Tomlinson C."/>
            <person name="Dauphin-Kohlberg S."/>
            <person name="Kozlowicz-Reilly A."/>
            <person name="Leonard S."/>
            <person name="Rohlfing T."/>
            <person name="Rock S.M."/>
            <person name="Tin-Wollam A.-M."/>
            <person name="Abbott A."/>
            <person name="Minx P."/>
            <person name="Maupin R."/>
            <person name="Strowmatt C."/>
            <person name="Latreille P."/>
            <person name="Miller N."/>
            <person name="Johnson D."/>
            <person name="Murray J."/>
            <person name="Woessner J.P."/>
            <person name="Wendl M.C."/>
            <person name="Yang S.-P."/>
            <person name="Schultz B.R."/>
            <person name="Wallis J.W."/>
            <person name="Spieth J."/>
            <person name="Bieri T.A."/>
            <person name="Nelson J.O."/>
            <person name="Berkowicz N."/>
            <person name="Wohldmann P.E."/>
            <person name="Cook L.L."/>
            <person name="Hickenbotham M.T."/>
            <person name="Eldred J."/>
            <person name="Williams D."/>
            <person name="Bedell J.A."/>
            <person name="Mardis E.R."/>
            <person name="Clifton S.W."/>
            <person name="Chissoe S.L."/>
            <person name="Marra M.A."/>
            <person name="Raymond C."/>
            <person name="Haugen E."/>
            <person name="Gillett W."/>
            <person name="Zhou Y."/>
            <person name="James R."/>
            <person name="Phelps K."/>
            <person name="Iadanoto S."/>
            <person name="Bubb K."/>
            <person name="Simms E."/>
            <person name="Levy R."/>
            <person name="Clendenning J."/>
            <person name="Kaul R."/>
            <person name="Kent W.J."/>
            <person name="Furey T.S."/>
            <person name="Baertsch R.A."/>
            <person name="Brent M.R."/>
            <person name="Keibler E."/>
            <person name="Flicek P."/>
            <person name="Bork P."/>
            <person name="Suyama M."/>
            <person name="Bailey J.A."/>
            <person name="Portnoy M.E."/>
            <person name="Torrents D."/>
            <person name="Chinwalla A.T."/>
            <person name="Gish W.R."/>
            <person name="Eddy S.R."/>
            <person name="McPherson J.D."/>
            <person name="Olson M.V."/>
            <person name="Eichler E.E."/>
            <person name="Green E.D."/>
            <person name="Waterston R.H."/>
            <person name="Wilson R.K."/>
        </authorList>
    </citation>
    <scope>NUCLEOTIDE SEQUENCE [LARGE SCALE GENOMIC DNA]</scope>
</reference>
<reference key="3">
    <citation type="journal article" date="2003" name="Science">
        <title>Human chromosome 7: DNA sequence and biology.</title>
        <authorList>
            <person name="Scherer S.W."/>
            <person name="Cheung J."/>
            <person name="MacDonald J.R."/>
            <person name="Osborne L.R."/>
            <person name="Nakabayashi K."/>
            <person name="Herbrick J.-A."/>
            <person name="Carson A.R."/>
            <person name="Parker-Katiraee L."/>
            <person name="Skaug J."/>
            <person name="Khaja R."/>
            <person name="Zhang J."/>
            <person name="Hudek A.K."/>
            <person name="Li M."/>
            <person name="Haddad M."/>
            <person name="Duggan G.E."/>
            <person name="Fernandez B.A."/>
            <person name="Kanematsu E."/>
            <person name="Gentles S."/>
            <person name="Christopoulos C.C."/>
            <person name="Choufani S."/>
            <person name="Kwasnicka D."/>
            <person name="Zheng X.H."/>
            <person name="Lai Z."/>
            <person name="Nusskern D.R."/>
            <person name="Zhang Q."/>
            <person name="Gu Z."/>
            <person name="Lu F."/>
            <person name="Zeesman S."/>
            <person name="Nowaczyk M.J."/>
            <person name="Teshima I."/>
            <person name="Chitayat D."/>
            <person name="Shuman C."/>
            <person name="Weksberg R."/>
            <person name="Zackai E.H."/>
            <person name="Grebe T.A."/>
            <person name="Cox S.R."/>
            <person name="Kirkpatrick S.J."/>
            <person name="Rahman N."/>
            <person name="Friedman J.M."/>
            <person name="Heng H.H.Q."/>
            <person name="Pelicci P.G."/>
            <person name="Lo-Coco F."/>
            <person name="Belloni E."/>
            <person name="Shaffer L.G."/>
            <person name="Pober B."/>
            <person name="Morton C.C."/>
            <person name="Gusella J.F."/>
            <person name="Bruns G.A.P."/>
            <person name="Korf B.R."/>
            <person name="Quade B.J."/>
            <person name="Ligon A.H."/>
            <person name="Ferguson H."/>
            <person name="Higgins A.W."/>
            <person name="Leach N.T."/>
            <person name="Herrick S.R."/>
            <person name="Lemyre E."/>
            <person name="Farra C.G."/>
            <person name="Kim H.-G."/>
            <person name="Summers A.M."/>
            <person name="Gripp K.W."/>
            <person name="Roberts W."/>
            <person name="Szatmari P."/>
            <person name="Winsor E.J.T."/>
            <person name="Grzeschik K.-H."/>
            <person name="Teebi A."/>
            <person name="Minassian B.A."/>
            <person name="Kere J."/>
            <person name="Armengol L."/>
            <person name="Pujana M.A."/>
            <person name="Estivill X."/>
            <person name="Wilson M.D."/>
            <person name="Koop B.F."/>
            <person name="Tosi S."/>
            <person name="Moore G.E."/>
            <person name="Boright A.P."/>
            <person name="Zlotorynski E."/>
            <person name="Kerem B."/>
            <person name="Kroisel P.M."/>
            <person name="Petek E."/>
            <person name="Oscier D.G."/>
            <person name="Mould S.J."/>
            <person name="Doehner H."/>
            <person name="Doehner K."/>
            <person name="Rommens J.M."/>
            <person name="Vincent J.B."/>
            <person name="Venter J.C."/>
            <person name="Li P.W."/>
            <person name="Mural R.J."/>
            <person name="Adams M.D."/>
            <person name="Tsui L.-C."/>
        </authorList>
    </citation>
    <scope>NUCLEOTIDE SEQUENCE [LARGE SCALE GENOMIC DNA]</scope>
</reference>
<reference key="4">
    <citation type="journal article" date="1999" name="Exp. Neurol.">
        <title>Evolutionarily conserved, alternative splicing of reelin during brain development.</title>
        <authorList>
            <person name="Lambert de Rouvroit C."/>
            <person name="Bernier B."/>
            <person name="Royaux I."/>
            <person name="de Bergeyck V."/>
            <person name="Goffinet A.M."/>
        </authorList>
    </citation>
    <scope>ALTERNATIVE SPLICING</scope>
</reference>
<reference key="5">
    <citation type="journal article" date="1998" name="Proc. Natl. Acad. Sci. U.S.A.">
        <title>A decrease of reelin expression as a putative vulnerability factor in schizophrenia.</title>
        <authorList>
            <person name="Impagnatiello F."/>
            <person name="Guidotti A.R."/>
            <person name="Pesold C."/>
            <person name="Dwivedi Y."/>
            <person name="Caruncho H."/>
            <person name="Pisu M.G."/>
            <person name="Uzunov D.P."/>
            <person name="Smalheiser N.R."/>
            <person name="Davis J.M."/>
            <person name="Pandey G.N."/>
            <person name="Pappas G.D."/>
            <person name="Tueting P."/>
            <person name="Sharma R.P."/>
            <person name="Costa E."/>
        </authorList>
    </citation>
    <scope>TISSUE SPECIFICITY</scope>
</reference>
<reference key="6">
    <citation type="journal article" date="2000" name="Nat. Genet.">
        <title>Autosomal recessive lissencephaly with cerebellar hypoplasia is associated with human RELN mutations.</title>
        <authorList>
            <person name="Hong S.E."/>
            <person name="Shugart Y.Y."/>
            <person name="Huang D.T."/>
            <person name="Shahwan S.A."/>
            <person name="Grant P.E."/>
            <person name="Hourihane J.O.B."/>
            <person name="Martin N.D.T."/>
            <person name="Walsh C.A."/>
        </authorList>
    </citation>
    <scope>INVOLVEMENT IN LIS2</scope>
</reference>
<reference key="7">
    <citation type="journal article" date="2001" name="Nat. Genet.">
        <authorList>
            <person name="Hong S.E."/>
            <person name="Shugart Y.Y."/>
            <person name="Huang D.T."/>
            <person name="Shahwan S.A."/>
            <person name="Grant P.E."/>
            <person name="Hourihane J.O.B."/>
            <person name="Martin N.D.T."/>
            <person name="Walsh C.A."/>
        </authorList>
    </citation>
    <scope>ERRATUM OF PUBMED:10973257</scope>
</reference>
<reference key="8">
    <citation type="journal article" date="2001" name="Mol. Psychiatry">
        <title>Reelin gene alleles and haplotypes as a factor predisposing to autistic disorder.</title>
        <authorList>
            <person name="Persico A.M."/>
            <person name="D'Agruma L."/>
            <person name="Maiorano N."/>
            <person name="Totaro A."/>
            <person name="Militerni R."/>
            <person name="Bravaccio C."/>
            <person name="Wassink T.H."/>
            <person name="Schneider C."/>
            <person name="Melmed R."/>
            <person name="Trillo S."/>
            <person name="Montecchi F."/>
            <person name="Palermo M."/>
            <person name="Pascucci T."/>
            <person name="Puglisi-Allegra S."/>
            <person name="Reichelt K.-L."/>
            <person name="Conciatori M."/>
            <person name="Marino R."/>
            <person name="Quattrocchi C.C."/>
            <person name="Baldi A."/>
            <person name="Zelante L."/>
            <person name="Gasparini P."/>
            <person name="Keller F."/>
        </authorList>
    </citation>
    <scope>POLYMORPHISM</scope>
</reference>
<reference key="9">
    <citation type="journal article" date="2009" name="J. Proteome Res.">
        <title>Glycoproteomics analysis of human liver tissue by combination of multiple enzyme digestion and hydrazide chemistry.</title>
        <authorList>
            <person name="Chen R."/>
            <person name="Jiang X."/>
            <person name="Sun D."/>
            <person name="Han G."/>
            <person name="Wang F."/>
            <person name="Ye M."/>
            <person name="Wang L."/>
            <person name="Zou H."/>
        </authorList>
    </citation>
    <scope>GLYCOSYLATION [LARGE SCALE ANALYSIS] AT ASN-305; ASN-1920 AND ASN-3015</scope>
    <source>
        <tissue>Liver</tissue>
    </source>
</reference>
<reference key="10">
    <citation type="journal article" date="2015" name="Am. J. Hum. Genet.">
        <title>Heterozygous reelin mutations cause autosomal-dominant lateral temporal epilepsy.</title>
        <authorList>
            <person name="Dazzo E."/>
            <person name="Fanciulli M."/>
            <person name="Serioli E."/>
            <person name="Minervini G."/>
            <person name="Pulitano P."/>
            <person name="Binelli S."/>
            <person name="Di Bonaventura C."/>
            <person name="Luisi C."/>
            <person name="Pasini E."/>
            <person name="Striano S."/>
            <person name="Striano P."/>
            <person name="Coppola G."/>
            <person name="Chiavegato A."/>
            <person name="Radovic S."/>
            <person name="Spadotto A."/>
            <person name="Uzzau S."/>
            <person name="La Neve A."/>
            <person name="Giallonardo A.T."/>
            <person name="Mecarelli O."/>
            <person name="Tosatto S.C."/>
            <person name="Ottman R."/>
            <person name="Michelucci R."/>
            <person name="Nobile C."/>
        </authorList>
    </citation>
    <scope>INVOLVEMENT IN ETL7</scope>
    <scope>VARIANTS ETL7 LEU-672; CYS-723; GLY-763; ASN-798; LEU-844; CYS-2783 AND LYS-3176</scope>
</reference>
<organism>
    <name type="scientific">Homo sapiens</name>
    <name type="common">Human</name>
    <dbReference type="NCBI Taxonomy" id="9606"/>
    <lineage>
        <taxon>Eukaryota</taxon>
        <taxon>Metazoa</taxon>
        <taxon>Chordata</taxon>
        <taxon>Craniata</taxon>
        <taxon>Vertebrata</taxon>
        <taxon>Euteleostomi</taxon>
        <taxon>Mammalia</taxon>
        <taxon>Eutheria</taxon>
        <taxon>Euarchontoglires</taxon>
        <taxon>Primates</taxon>
        <taxon>Haplorrhini</taxon>
        <taxon>Catarrhini</taxon>
        <taxon>Hominidae</taxon>
        <taxon>Homo</taxon>
    </lineage>
</organism>
<protein>
    <recommendedName>
        <fullName evidence="11">Reelin</fullName>
        <ecNumber evidence="1">3.4.21.-</ecNumber>
    </recommendedName>
</protein>
<accession>P78509</accession>
<accession>A4D0P9</accession>
<accession>A4D0Q0</accession>
<accession>Q86UJ0</accession>
<accession>Q86UJ8</accession>
<accession>Q8NDV0</accession>
<accession>Q9UDQ2</accession>
<sequence>MERSGWARQTFLLALLLGATLRARAAAGYYPRFSPFFFLCTHHGELEGDGEQGEVLISLHIAGNPTYYVPGQEYHVTISTSTFFDGLLVTGLYTSTSVQASQSIGGSSAFGFGIMSDHQFGNQFMCSVVASHVSHLPTTNLSFIWIAPPAGTGCVNFMATATHRGQVIFKDALAQQLCEQGAPTDVTVHPHLAEIHSDSIILRDDFDSYHQLQLNPNIWVECNNCETGEQCGAIMHGNAVTFCEPYGPRELITTGLNTTTASVLQFSIGSGSCRFSYSDPSIIVLYAKNNSADWIQLEKIRAPSNVSTIIHILYLPEDAKGENVQFQWKQENLRVGEVYEACWALDNILIINSAHRQVVLEDSLDPVDTGNWLFFPGATVKHSCQSDGNSIYFHGNEGSEFNFATTRDVDLSTEDIQEQWSEEFESQPTGWDVLGAVIGTECGTIESGLSMVFLKDGERKLCTPSMDTTGYGNLRFYFVMGGICDPGNSHENDIILYAKIEGRKEHITLDTLSYSSYKVPSLVSVVINPELQTPATKFCLRQKNHQGHNRNVWAVDFFHVLPVLPSTMSHMIQFSINLGCGTHQPGNSVSLEFSTNHGRSWSLLHTECLPEICAGPHLPHSTVYSSENYSGWNRITIPLPNAALTRNTRIRWRQTGPILGNMWAIDNVYIGPSCLKFCSGRGQCTRHGCKCDPGFSGPACEMASQTFPMFISESFGSSRLSSYHNFYSIRGAEVSFGCGVLASGKALVFNKDGRRQLITSFLDSSQSRFLQFTLRLGSKSVLSTCRAPDQPGEGVLLHYSYDNGITWKLLEHYSYLSYHEPRIISVELPGDAKQFGIQFRWWQPYHSSQREDVWAIDEIIMTSVLFNSISLDFTNLVEVTQSLGFYLGNVQPYCGHDWTLCFTGDSKLASSMRYVETQSMQIGASYMIQFSLVMGCGQKYTPHMDNQVKLEYSTNHGLTWHLVQEECLPSMPSCQEFTSASIYHASEFTQWRRVIVLLPQKTWSSATRFRWSQSYYTAQDEWALDSIYIGQQCPNMCSGHGSCDHGICRCDQGYQGTECHPEAALPSTIMSDFENQNGWESDWQEVIGGEIVKPEQGCGVISSGSSLYFSKAGKRQLVSWDLDTSWVDFVQFYIQIGGESASCNKPDSREEGVLLQYSNNGGIQWHLLAEMYFSDFSKPRFVYLELPAAAKTPCTRFRWWQPVFSGEDYDQWAVDDIIILSEKQKQIIPVINPTLPQNFYEKPAFDYPMNQMSVWLMLANEGMVKNETFCAATPSAMIFGKSDGDRFAVTRDLTLKPGYVLQFKLNIGCANQFSSTAPVLLQYSHDAGMSWFLVKEGCYPASAGKGCEGNSRELSEPTMYHTGDFEEWTRITIVIPRSLASSKTRFRWIQESSSQKNVPPFGLDGVYISEPCPSYCSGHGDCISGVCFCDLGYTAAQGTCVSNVPNHNEMFDRFEGKLSPLWYKITGAQVGTGCGTLNDGKSLYFNGPGKREARTVPLDTRNIRLVQFYIQIGSKTSGITCIKPRTRNEGLIVQYSNDNGILWHLLRELDFMSFLEPQIISIDLPQDAKTPATAFRWWQPQHGKHSAQWALDDVLIGMNDSSQTGFQDKFDGSIDLQANWYRIQGGQVDIDCLSMDTALIFTENIGKPRYAETWDFHVSASTFLQFEMSMGCSKPFSNSHSVQLQYSLNNGKDWHLVTEECVPPTIGCLHYTESSIYTSERFQNWKRITVYLPLSTISPRTRFRWIQANYTVGADSWAIDNVVLASGCPWMCSGRGICDAGRCVCDRGFGGPYCVPVVPLPSILKDDFNGNLHPDLWPEVYGAERGNLNGETIKSGTSLIFKGEGLRMLISRDLDCTNTMYVQFSLRFIAKSTPERSHSILLQFSISGGITWHLMDEFYFPQTTNILFINVPLPYTAQTNATRFRLWQPYNNGKKEEIWIVDDFIIDGNNVNNPVMLLDTFDFGPREDNWFFYPGGNIGLYCPYSSKGAPEEDSAMVFVSNEVGEHSITTRDLNVNENTIIQFEINVGCSTDSSSADPVRLEFSRDFGATWHLLLPLCYHSSSHVSSLCSTEHHPSSTYYAGTMQGWRREVVHFGKLHLCGSVRFRWYQGFYPAGSQPVTWAIDNVYIGPQCEEMCNGQGSCINGTKCICDPGYSGPTCKISTKNPDFLKDDFEGQLESDRFLLMSGGKPSRKCGILSSGNNLFFNEDGLRMLMTRDLDLSHARFVQFFMRLGCGKGVPDPRSQPVLLQYSLNGGLSWSLLQEFLFSNSSNVGRYIALEIPLKARSGSTRLRWWQPSENGHFYSPWVIDQILIGGNISGNTVLEDDFTTLDSRKWLLHPGGTKMPVCGSTGDALVFIEKASTRYVVSTDVAVNEDSFLQIDFAASCSVTDSCYAIELEYSVDLGLSWHPLVRDCLPTNVECSRYHLQRILVSDTFNKWTRITLPLPPYTRSQATRFRWHQPAPFDKQQTWAIDNVYIGDGCIDMCSGHGRCIQGNCVCDEQWGGLYCDDPETSLPTQLKDNFNRAPSSQNWLTVNGGKLSTVCGAVASGMALHFSGGCSRLLVTVDLNLTNAEFIQFYFMYGCLITPNNRNQGVLLEYSVNGGITWNLLMEIFYDQYSKPGFVNILLPPDAKEIATRFRWWQPRHDGLDQNDWAIDNVLISGSADQRTVMLDTFSSAPVPQHERSPADAGPVGRIAFDMFMEDKTSVNEHWLFHDDCTVERFCDSPDGVMLCGSHDGREVYAVTHDLTPTEGWIMQFKISVGCKVSEKIAQNQIHVQYSTDFGVSWNYLVPQCLPADPKCSGSVSQPSVFFPTKGWKRITYPLPESLVGNPVRFRFYQKYSDMQWAIDNFYLGPGCLDNCRGHGDCLREQCICDPGYSGPNCYLTHTLKTFLKERFDSEEIKPDLWMSLEGGSTCTECGILAEDTALYFGGSTVRQAVTQDLDLRGAKFLQYWGRIGSENNMTSCHRPICRKEGVLLDYSTDGGITWTLLHEMDYQKYISVRHDYILLPEDALTNTTRLRWWQPFVISNGIVVSGVERAQWALDNILIGGAEINPSQLVDTFDDEGTSHEENWSFYPNAVRTAGFCGNPSFHLYWPNKKKDKTHNALSSRELIIQPGYMMQFKIVVGCEATSCGDLHSVMLEYTKDARSDSWQLVQTQCLPSSSNSIGCSPFQFHEATIYNSVNSSSWKRITIQLPDHVSSSATQFRWIQKGEETEKQSWAIDHVYIGEACPKLCSGHGYCTTGAICICDESFQGDDCSVFSHDLPSYIKDNFESARVTEANWETIQGGVIGSGCGQLAPYAHGDSLYFNGCQIRQAATKPLDLTRASKIMFVLQIGSMSQTDSCNSDLSGPHAVDKAVLLQYSVNNGITWHVIAQHQPKDFTQAQRVSYNVPLEARMKGVLLRWWQPRHNGTGHDQWALDHVEVVLVSTRKQNYMMNFSRQHGLRHFYNRRRRSLRRYP</sequence>
<name>RELN_HUMAN</name>
<proteinExistence type="evidence at protein level"/>